<accession>Q06GT5</accession>
<proteinExistence type="uncertain"/>
<name>YCF15_DRIGR</name>
<reference key="1">
    <citation type="journal article" date="2006" name="BMC Evol. Biol.">
        <title>Complete plastid genome sequences of Drimys, Liriodendron, and Piper: implications for the phylogenetic relationships of magnoliids.</title>
        <authorList>
            <person name="Cai Z."/>
            <person name="Penaflor C."/>
            <person name="Kuehl J.V."/>
            <person name="Leebens-Mack J."/>
            <person name="Carlson J.E."/>
            <person name="dePamphilis C.W."/>
            <person name="Boore J.L."/>
            <person name="Jansen R.K."/>
        </authorList>
    </citation>
    <scope>NUCLEOTIDE SEQUENCE [LARGE SCALE GENOMIC DNA]</scope>
</reference>
<dbReference type="EMBL" id="DQ887676">
    <property type="protein sequence ID" value="ABH88341.1"/>
    <property type="molecule type" value="Genomic_DNA"/>
</dbReference>
<dbReference type="EMBL" id="DQ887676">
    <property type="protein sequence ID" value="ABH88360.1"/>
    <property type="molecule type" value="Genomic_DNA"/>
</dbReference>
<dbReference type="SMR" id="Q06GT5"/>
<dbReference type="GO" id="GO:0009507">
    <property type="term" value="C:chloroplast"/>
    <property type="evidence" value="ECO:0007669"/>
    <property type="project" value="UniProtKB-SubCell"/>
</dbReference>
<dbReference type="InterPro" id="IPR019645">
    <property type="entry name" value="Uncharacterised_Ycf15"/>
</dbReference>
<dbReference type="Pfam" id="PF10705">
    <property type="entry name" value="Ycf15"/>
    <property type="match status" value="1"/>
</dbReference>
<feature type="chain" id="PRO_0000360384" description="Putative uncharacterized protein ycf15">
    <location>
        <begin position="1"/>
        <end position="77"/>
    </location>
</feature>
<comment type="subcellular location">
    <subcellularLocation>
        <location>Plastid</location>
        <location>Chloroplast</location>
    </subcellularLocation>
</comment>
<comment type="similarity">
    <text evidence="1">Belongs to the ycf15 family.</text>
</comment>
<comment type="caution">
    <text evidence="1">Could be the product of a pseudogene.</text>
</comment>
<protein>
    <recommendedName>
        <fullName>Putative uncharacterized protein ycf15</fullName>
    </recommendedName>
</protein>
<geneLocation type="chloroplast"/>
<gene>
    <name type="primary">ycf15-A</name>
</gene>
<gene>
    <name type="primary">ycf15-B</name>
</gene>
<keyword id="KW-0150">Chloroplast</keyword>
<keyword id="KW-0934">Plastid</keyword>
<evidence type="ECO:0000305" key="1"/>
<organism>
    <name type="scientific">Drimys granadensis</name>
    <dbReference type="NCBI Taxonomy" id="224735"/>
    <lineage>
        <taxon>Eukaryota</taxon>
        <taxon>Viridiplantae</taxon>
        <taxon>Streptophyta</taxon>
        <taxon>Embryophyta</taxon>
        <taxon>Tracheophyta</taxon>
        <taxon>Spermatophyta</taxon>
        <taxon>Magnoliopsida</taxon>
        <taxon>Magnoliidae</taxon>
        <taxon>Canellales</taxon>
        <taxon>Winteraceae</taxon>
        <taxon>Drimys</taxon>
    </lineage>
</organism>
<sequence length="77" mass="9235">MLLLKHGRIEILDQNTMYGWYELPKQEFLNGEQPEPITHYIKQFPLMKDVNSLENKKDACPMKWFLLSAPITNHWFN</sequence>